<keyword id="KW-0687">Ribonucleoprotein</keyword>
<keyword id="KW-0689">Ribosomal protein</keyword>
<keyword id="KW-0694">RNA-binding</keyword>
<keyword id="KW-0699">rRNA-binding</keyword>
<accession>B1JMJ7</accession>
<name>RL21_YERPY</name>
<proteinExistence type="inferred from homology"/>
<sequence length="103" mass="11644">MYAVFQSGGKQHRVSEGQTIRLEKLDIATGETIEFDQVLMIANGEEINIGAPLVDGGKIKAEIIAHGRGEKIKIVKFRRRKHYRKQQGHRQWFTDVKITGISA</sequence>
<protein>
    <recommendedName>
        <fullName evidence="1">Large ribosomal subunit protein bL21</fullName>
    </recommendedName>
    <alternativeName>
        <fullName evidence="2">50S ribosomal protein L21</fullName>
    </alternativeName>
</protein>
<gene>
    <name evidence="1" type="primary">rplU</name>
    <name type="ordered locus">YPK_3757</name>
</gene>
<comment type="function">
    <text evidence="1">This protein binds to 23S rRNA in the presence of protein L20.</text>
</comment>
<comment type="subunit">
    <text evidence="1">Part of the 50S ribosomal subunit. Contacts protein L20.</text>
</comment>
<comment type="similarity">
    <text evidence="1">Belongs to the bacterial ribosomal protein bL21 family.</text>
</comment>
<organism>
    <name type="scientific">Yersinia pseudotuberculosis serotype O:3 (strain YPIII)</name>
    <dbReference type="NCBI Taxonomy" id="502800"/>
    <lineage>
        <taxon>Bacteria</taxon>
        <taxon>Pseudomonadati</taxon>
        <taxon>Pseudomonadota</taxon>
        <taxon>Gammaproteobacteria</taxon>
        <taxon>Enterobacterales</taxon>
        <taxon>Yersiniaceae</taxon>
        <taxon>Yersinia</taxon>
    </lineage>
</organism>
<feature type="chain" id="PRO_1000143875" description="Large ribosomal subunit protein bL21">
    <location>
        <begin position="1"/>
        <end position="103"/>
    </location>
</feature>
<evidence type="ECO:0000255" key="1">
    <source>
        <dbReference type="HAMAP-Rule" id="MF_01363"/>
    </source>
</evidence>
<evidence type="ECO:0000305" key="2"/>
<dbReference type="EMBL" id="CP000950">
    <property type="protein sequence ID" value="ACA70024.1"/>
    <property type="molecule type" value="Genomic_DNA"/>
</dbReference>
<dbReference type="RefSeq" id="WP_002210178.1">
    <property type="nucleotide sequence ID" value="NZ_CP009792.1"/>
</dbReference>
<dbReference type="SMR" id="B1JMJ7"/>
<dbReference type="GeneID" id="57975202"/>
<dbReference type="KEGG" id="ypy:YPK_3757"/>
<dbReference type="PATRIC" id="fig|502800.11.peg.107"/>
<dbReference type="GO" id="GO:0005737">
    <property type="term" value="C:cytoplasm"/>
    <property type="evidence" value="ECO:0007669"/>
    <property type="project" value="UniProtKB-ARBA"/>
</dbReference>
<dbReference type="GO" id="GO:1990904">
    <property type="term" value="C:ribonucleoprotein complex"/>
    <property type="evidence" value="ECO:0007669"/>
    <property type="project" value="UniProtKB-KW"/>
</dbReference>
<dbReference type="GO" id="GO:0005840">
    <property type="term" value="C:ribosome"/>
    <property type="evidence" value="ECO:0007669"/>
    <property type="project" value="UniProtKB-KW"/>
</dbReference>
<dbReference type="GO" id="GO:0019843">
    <property type="term" value="F:rRNA binding"/>
    <property type="evidence" value="ECO:0007669"/>
    <property type="project" value="UniProtKB-UniRule"/>
</dbReference>
<dbReference type="GO" id="GO:0003735">
    <property type="term" value="F:structural constituent of ribosome"/>
    <property type="evidence" value="ECO:0007669"/>
    <property type="project" value="InterPro"/>
</dbReference>
<dbReference type="GO" id="GO:0006412">
    <property type="term" value="P:translation"/>
    <property type="evidence" value="ECO:0007669"/>
    <property type="project" value="UniProtKB-UniRule"/>
</dbReference>
<dbReference type="HAMAP" id="MF_01363">
    <property type="entry name" value="Ribosomal_bL21"/>
    <property type="match status" value="1"/>
</dbReference>
<dbReference type="InterPro" id="IPR028909">
    <property type="entry name" value="bL21-like"/>
</dbReference>
<dbReference type="InterPro" id="IPR036164">
    <property type="entry name" value="bL21-like_sf"/>
</dbReference>
<dbReference type="InterPro" id="IPR001787">
    <property type="entry name" value="Ribosomal_bL21"/>
</dbReference>
<dbReference type="InterPro" id="IPR018258">
    <property type="entry name" value="Ribosomal_bL21_CS"/>
</dbReference>
<dbReference type="NCBIfam" id="TIGR00061">
    <property type="entry name" value="L21"/>
    <property type="match status" value="1"/>
</dbReference>
<dbReference type="PANTHER" id="PTHR21349">
    <property type="entry name" value="50S RIBOSOMAL PROTEIN L21"/>
    <property type="match status" value="1"/>
</dbReference>
<dbReference type="PANTHER" id="PTHR21349:SF0">
    <property type="entry name" value="LARGE RIBOSOMAL SUBUNIT PROTEIN BL21M"/>
    <property type="match status" value="1"/>
</dbReference>
<dbReference type="Pfam" id="PF00829">
    <property type="entry name" value="Ribosomal_L21p"/>
    <property type="match status" value="1"/>
</dbReference>
<dbReference type="SUPFAM" id="SSF141091">
    <property type="entry name" value="L21p-like"/>
    <property type="match status" value="1"/>
</dbReference>
<dbReference type="PROSITE" id="PS01169">
    <property type="entry name" value="RIBOSOMAL_L21"/>
    <property type="match status" value="1"/>
</dbReference>
<reference key="1">
    <citation type="submission" date="2008-02" db="EMBL/GenBank/DDBJ databases">
        <title>Complete sequence of Yersinia pseudotuberculosis YPIII.</title>
        <authorList>
            <consortium name="US DOE Joint Genome Institute"/>
            <person name="Copeland A."/>
            <person name="Lucas S."/>
            <person name="Lapidus A."/>
            <person name="Glavina del Rio T."/>
            <person name="Dalin E."/>
            <person name="Tice H."/>
            <person name="Bruce D."/>
            <person name="Goodwin L."/>
            <person name="Pitluck S."/>
            <person name="Munk A.C."/>
            <person name="Brettin T."/>
            <person name="Detter J.C."/>
            <person name="Han C."/>
            <person name="Tapia R."/>
            <person name="Schmutz J."/>
            <person name="Larimer F."/>
            <person name="Land M."/>
            <person name="Hauser L."/>
            <person name="Challacombe J.F."/>
            <person name="Green L."/>
            <person name="Lindler L.E."/>
            <person name="Nikolich M.P."/>
            <person name="Richardson P."/>
        </authorList>
    </citation>
    <scope>NUCLEOTIDE SEQUENCE [LARGE SCALE GENOMIC DNA]</scope>
    <source>
        <strain>YPIII</strain>
    </source>
</reference>